<gene>
    <name evidence="1" type="primary">glk</name>
    <name type="ordered locus">UTI89_C2720</name>
</gene>
<dbReference type="EC" id="2.7.1.2" evidence="1"/>
<dbReference type="EMBL" id="CP000243">
    <property type="protein sequence ID" value="ABE08186.1"/>
    <property type="molecule type" value="Genomic_DNA"/>
</dbReference>
<dbReference type="RefSeq" id="WP_000170355.1">
    <property type="nucleotide sequence ID" value="NZ_CP064825.1"/>
</dbReference>
<dbReference type="SMR" id="Q1R8X8"/>
<dbReference type="KEGG" id="eci:UTI89_C2720"/>
<dbReference type="HOGENOM" id="CLU_042582_1_0_6"/>
<dbReference type="Proteomes" id="UP000001952">
    <property type="component" value="Chromosome"/>
</dbReference>
<dbReference type="GO" id="GO:0005829">
    <property type="term" value="C:cytosol"/>
    <property type="evidence" value="ECO:0007669"/>
    <property type="project" value="TreeGrafter"/>
</dbReference>
<dbReference type="GO" id="GO:0005524">
    <property type="term" value="F:ATP binding"/>
    <property type="evidence" value="ECO:0007669"/>
    <property type="project" value="UniProtKB-UniRule"/>
</dbReference>
<dbReference type="GO" id="GO:0005536">
    <property type="term" value="F:D-glucose binding"/>
    <property type="evidence" value="ECO:0007669"/>
    <property type="project" value="InterPro"/>
</dbReference>
<dbReference type="GO" id="GO:0004340">
    <property type="term" value="F:glucokinase activity"/>
    <property type="evidence" value="ECO:0007669"/>
    <property type="project" value="UniProtKB-UniRule"/>
</dbReference>
<dbReference type="GO" id="GO:0006096">
    <property type="term" value="P:glycolytic process"/>
    <property type="evidence" value="ECO:0007669"/>
    <property type="project" value="UniProtKB-UniRule"/>
</dbReference>
<dbReference type="CDD" id="cd24008">
    <property type="entry name" value="ASKHA_NBD_GLK"/>
    <property type="match status" value="1"/>
</dbReference>
<dbReference type="FunFam" id="3.30.420.40:FF:000045">
    <property type="entry name" value="Glucokinase"/>
    <property type="match status" value="1"/>
</dbReference>
<dbReference type="FunFam" id="3.40.367.20:FF:000002">
    <property type="entry name" value="Glucokinase"/>
    <property type="match status" value="1"/>
</dbReference>
<dbReference type="Gene3D" id="3.30.420.40">
    <property type="match status" value="1"/>
</dbReference>
<dbReference type="Gene3D" id="3.40.367.20">
    <property type="match status" value="1"/>
</dbReference>
<dbReference type="HAMAP" id="MF_00524">
    <property type="entry name" value="Glucokinase"/>
    <property type="match status" value="1"/>
</dbReference>
<dbReference type="InterPro" id="IPR043129">
    <property type="entry name" value="ATPase_NBD"/>
</dbReference>
<dbReference type="InterPro" id="IPR050201">
    <property type="entry name" value="Bacterial_glucokinase"/>
</dbReference>
<dbReference type="InterPro" id="IPR003836">
    <property type="entry name" value="Glucokinase"/>
</dbReference>
<dbReference type="NCBIfam" id="TIGR00749">
    <property type="entry name" value="glk"/>
    <property type="match status" value="1"/>
</dbReference>
<dbReference type="NCBIfam" id="NF001414">
    <property type="entry name" value="PRK00292.1-1"/>
    <property type="match status" value="1"/>
</dbReference>
<dbReference type="NCBIfam" id="NF001416">
    <property type="entry name" value="PRK00292.1-3"/>
    <property type="match status" value="1"/>
</dbReference>
<dbReference type="PANTHER" id="PTHR47690">
    <property type="entry name" value="GLUCOKINASE"/>
    <property type="match status" value="1"/>
</dbReference>
<dbReference type="PANTHER" id="PTHR47690:SF1">
    <property type="entry name" value="GLUCOKINASE"/>
    <property type="match status" value="1"/>
</dbReference>
<dbReference type="Pfam" id="PF02685">
    <property type="entry name" value="Glucokinase"/>
    <property type="match status" value="1"/>
</dbReference>
<dbReference type="SUPFAM" id="SSF53067">
    <property type="entry name" value="Actin-like ATPase domain"/>
    <property type="match status" value="1"/>
</dbReference>
<proteinExistence type="inferred from homology"/>
<organism>
    <name type="scientific">Escherichia coli (strain UTI89 / UPEC)</name>
    <dbReference type="NCBI Taxonomy" id="364106"/>
    <lineage>
        <taxon>Bacteria</taxon>
        <taxon>Pseudomonadati</taxon>
        <taxon>Pseudomonadota</taxon>
        <taxon>Gammaproteobacteria</taxon>
        <taxon>Enterobacterales</taxon>
        <taxon>Enterobacteriaceae</taxon>
        <taxon>Escherichia</taxon>
    </lineage>
</organism>
<name>GLK_ECOUT</name>
<sequence length="321" mass="34709">MTKYALVGDVGGTNARLALCDIASGEISQAKTYSGLDYPSLEAVIRVYLEEHKVEVKDGCIAIACPITGDWVAMTNHTWAFSIAEMKKNLGFSHLEIINDFTAVSMAIPMLKKEHLIQFGGAEPVEGKPIAVYGAGTGLGVAHLVHVDKRWVSLPGEGGHVDFAPNSEEEGIILEILRAEIGHVSAERVLSGPGLVNLYRAIVKADNRLPENLKPKDITERALADSCTDCRRALSLFCVIMGRFGGNLALNLGTFGGVFIAGGIVPRFLEFFKASGFRAAFEDKGRFKEYVHDIPVYLIVHDNPGLLGSGAHLRQTLGHIL</sequence>
<evidence type="ECO:0000255" key="1">
    <source>
        <dbReference type="HAMAP-Rule" id="MF_00524"/>
    </source>
</evidence>
<keyword id="KW-0067">ATP-binding</keyword>
<keyword id="KW-0963">Cytoplasm</keyword>
<keyword id="KW-0324">Glycolysis</keyword>
<keyword id="KW-0418">Kinase</keyword>
<keyword id="KW-0547">Nucleotide-binding</keyword>
<keyword id="KW-0808">Transferase</keyword>
<comment type="function">
    <text>Not highly important in E.coli as glucose is transported into the cell by the PTS system already as glucose 6-phosphate.</text>
</comment>
<comment type="catalytic activity">
    <reaction evidence="1">
        <text>D-glucose + ATP = D-glucose 6-phosphate + ADP + H(+)</text>
        <dbReference type="Rhea" id="RHEA:17825"/>
        <dbReference type="ChEBI" id="CHEBI:4167"/>
        <dbReference type="ChEBI" id="CHEBI:15378"/>
        <dbReference type="ChEBI" id="CHEBI:30616"/>
        <dbReference type="ChEBI" id="CHEBI:61548"/>
        <dbReference type="ChEBI" id="CHEBI:456216"/>
        <dbReference type="EC" id="2.7.1.2"/>
    </reaction>
</comment>
<comment type="subcellular location">
    <subcellularLocation>
        <location evidence="1">Cytoplasm</location>
    </subcellularLocation>
</comment>
<comment type="similarity">
    <text evidence="1">Belongs to the bacterial glucokinase family.</text>
</comment>
<feature type="chain" id="PRO_0000268772" description="Glucokinase">
    <location>
        <begin position="1"/>
        <end position="321"/>
    </location>
</feature>
<feature type="binding site" evidence="1">
    <location>
        <begin position="8"/>
        <end position="13"/>
    </location>
    <ligand>
        <name>ATP</name>
        <dbReference type="ChEBI" id="CHEBI:30616"/>
    </ligand>
</feature>
<reference key="1">
    <citation type="journal article" date="2006" name="Proc. Natl. Acad. Sci. U.S.A.">
        <title>Identification of genes subject to positive selection in uropathogenic strains of Escherichia coli: a comparative genomics approach.</title>
        <authorList>
            <person name="Chen S.L."/>
            <person name="Hung C.-S."/>
            <person name="Xu J."/>
            <person name="Reigstad C.S."/>
            <person name="Magrini V."/>
            <person name="Sabo A."/>
            <person name="Blasiar D."/>
            <person name="Bieri T."/>
            <person name="Meyer R.R."/>
            <person name="Ozersky P."/>
            <person name="Armstrong J.R."/>
            <person name="Fulton R.S."/>
            <person name="Latreille J.P."/>
            <person name="Spieth J."/>
            <person name="Hooton T.M."/>
            <person name="Mardis E.R."/>
            <person name="Hultgren S.J."/>
            <person name="Gordon J.I."/>
        </authorList>
    </citation>
    <scope>NUCLEOTIDE SEQUENCE [LARGE SCALE GENOMIC DNA]</scope>
    <source>
        <strain>UTI89 / UPEC</strain>
    </source>
</reference>
<accession>Q1R8X8</accession>
<protein>
    <recommendedName>
        <fullName evidence="1">Glucokinase</fullName>
        <ecNumber evidence="1">2.7.1.2</ecNumber>
    </recommendedName>
    <alternativeName>
        <fullName evidence="1">Glucose kinase</fullName>
    </alternativeName>
</protein>